<protein>
    <recommendedName>
        <fullName evidence="1">Minor capsid protein L2</fullName>
    </recommendedName>
</protein>
<feature type="chain" id="PRO_0000133589" description="Minor capsid protein L2">
    <location>
        <begin position="1"/>
        <end position="524"/>
    </location>
</feature>
<feature type="short sequence motif" description="Nuclear localization signal" evidence="1">
    <location>
        <begin position="1"/>
        <end position="10"/>
    </location>
</feature>
<feature type="short sequence motif" description="Nuclear localization signal" evidence="1">
    <location>
        <begin position="516"/>
        <end position="523"/>
    </location>
</feature>
<feature type="disulfide bond" evidence="1">
    <location>
        <begin position="19"/>
        <end position="25"/>
    </location>
</feature>
<proteinExistence type="inferred from homology"/>
<accession>P50796</accession>
<keyword id="KW-0167">Capsid protein</keyword>
<keyword id="KW-1176">Cytoplasmic inwards viral transport</keyword>
<keyword id="KW-1015">Disulfide bond</keyword>
<keyword id="KW-0238">DNA-binding</keyword>
<keyword id="KW-1039">Host endosome</keyword>
<keyword id="KW-1040">Host Golgi apparatus</keyword>
<keyword id="KW-1048">Host nucleus</keyword>
<keyword id="KW-0945">Host-virus interaction</keyword>
<keyword id="KW-0426">Late protein</keyword>
<keyword id="KW-1177">Microtubular inwards viral transport</keyword>
<keyword id="KW-0597">Phosphoprotein</keyword>
<keyword id="KW-1185">Reference proteome</keyword>
<keyword id="KW-1163">Viral penetration into host nucleus</keyword>
<keyword id="KW-0946">Virion</keyword>
<keyword id="KW-1160">Virus entry into host cell</keyword>
<gene>
    <name evidence="1" type="primary">L2</name>
</gene>
<evidence type="ECO:0000255" key="1">
    <source>
        <dbReference type="HAMAP-Rule" id="MF_04003"/>
    </source>
</evidence>
<comment type="function">
    <text evidence="1">Minor protein of the capsid that localizes along the inner surface of the virion, within the central cavities beneath the L1 pentamers. Plays a role in capsid stabilization through interaction with the major capsid protein L1. Once the virion enters the host cell, L2 escorts the genomic DNA into the nucleus by promoting escape from the endosomal compartments and traffic through the host Golgi network. Mechanistically, the C-terminus of L2 possesses a cell-penetrating peptide that protudes from the host endosome, interacts with host cytoplasmic retromer cargo and thereby mediates the capsid delivery to the host trans-Golgi network. Plays a role through its interaction with host dynein in the intracellular microtubule-dependent transport of viral capsid toward the nucleus. Mediates the viral genome import into the nucleus through binding to host importins. Once within the nucleus, L2 localizes viral genomes to host PML bodies in order to activate early gene expression for establishment of infection. Later on, promotes late gene expression by interacting with the viral E2 protein and by inhibiting its transcriptional activation functions. During virion assembly, encapsidates the genome by direct interaction with the viral DNA.</text>
</comment>
<comment type="subunit">
    <text evidence="1">Interacts with major capsid protein L1. Interacts with E2; this interaction inhibits E2 transcriptional activity but not the DNA replication function E2. Interacts with host GADD45GIP1. Interacts with host HSPA8; this interaction is required for L2 nuclear translocation. Interacts with host importins KPNB2 and KPNB3. Forms a complex with importin alpha2-beta1 heterodimers via interaction with the importin alpha2 adapter. Interacts with host DYNLT1; this interaction is essential for virus intracellular transport during entry. Interacts (via C-terminus) with host retromer subunits VPS35 and VPS29.</text>
</comment>
<comment type="subcellular location">
    <subcellularLocation>
        <location evidence="1">Virion</location>
    </subcellularLocation>
    <subcellularLocation>
        <location evidence="1">Host nucleus</location>
    </subcellularLocation>
    <subcellularLocation>
        <location evidence="1">Host early endosome</location>
    </subcellularLocation>
    <subcellularLocation>
        <location evidence="1">Host Golgi apparatus</location>
    </subcellularLocation>
</comment>
<comment type="PTM">
    <text evidence="1">Highly phosphorylated.</text>
</comment>
<comment type="similarity">
    <text evidence="1">Belongs to the papillomaviridae L2 protein family.</text>
</comment>
<dbReference type="EMBL" id="U31780">
    <property type="protein sequence ID" value="AAA79406.1"/>
    <property type="molecule type" value="Genomic_DNA"/>
</dbReference>
<dbReference type="Proteomes" id="UP000009111">
    <property type="component" value="Genome"/>
</dbReference>
<dbReference type="GO" id="GO:0043657">
    <property type="term" value="C:host cell"/>
    <property type="evidence" value="ECO:0007669"/>
    <property type="project" value="GOC"/>
</dbReference>
<dbReference type="GO" id="GO:0044174">
    <property type="term" value="C:host cell endosome"/>
    <property type="evidence" value="ECO:0007669"/>
    <property type="project" value="UniProtKB-KW"/>
</dbReference>
<dbReference type="GO" id="GO:0044177">
    <property type="term" value="C:host cell Golgi apparatus"/>
    <property type="evidence" value="ECO:0007669"/>
    <property type="project" value="UniProtKB-SubCell"/>
</dbReference>
<dbReference type="GO" id="GO:0042025">
    <property type="term" value="C:host cell nucleus"/>
    <property type="evidence" value="ECO:0007669"/>
    <property type="project" value="UniProtKB-SubCell"/>
</dbReference>
<dbReference type="GO" id="GO:0019028">
    <property type="term" value="C:viral capsid"/>
    <property type="evidence" value="ECO:0007669"/>
    <property type="project" value="UniProtKB-UniRule"/>
</dbReference>
<dbReference type="GO" id="GO:0003677">
    <property type="term" value="F:DNA binding"/>
    <property type="evidence" value="ECO:0007669"/>
    <property type="project" value="UniProtKB-UniRule"/>
</dbReference>
<dbReference type="GO" id="GO:0005198">
    <property type="term" value="F:structural molecule activity"/>
    <property type="evidence" value="ECO:0007669"/>
    <property type="project" value="UniProtKB-UniRule"/>
</dbReference>
<dbReference type="GO" id="GO:0075521">
    <property type="term" value="P:microtubule-dependent intracellular transport of viral material towards nucleus"/>
    <property type="evidence" value="ECO:0007669"/>
    <property type="project" value="UniProtKB-UniRule"/>
</dbReference>
<dbReference type="GO" id="GO:0046718">
    <property type="term" value="P:symbiont entry into host cell"/>
    <property type="evidence" value="ECO:0007669"/>
    <property type="project" value="UniProtKB-KW"/>
</dbReference>
<dbReference type="GO" id="GO:0075732">
    <property type="term" value="P:viral penetration into host nucleus"/>
    <property type="evidence" value="ECO:0007669"/>
    <property type="project" value="UniProtKB-KW"/>
</dbReference>
<dbReference type="HAMAP" id="MF_04003">
    <property type="entry name" value="PPV_L2"/>
    <property type="match status" value="1"/>
</dbReference>
<dbReference type="InterPro" id="IPR000784">
    <property type="entry name" value="Late_L2"/>
</dbReference>
<dbReference type="Pfam" id="PF00513">
    <property type="entry name" value="Late_protein_L2"/>
    <property type="match status" value="1"/>
</dbReference>
<reference key="1">
    <citation type="submission" date="1995-10" db="EMBL/GenBank/DDBJ databases">
        <authorList>
            <person name="Delius H."/>
        </authorList>
    </citation>
    <scope>NUCLEOTIDE SEQUENCE [GENOMIC DNA]</scope>
</reference>
<sequence>MARARRTKRASVTDIYKGCKASGTCPPDVINKVEQNTLADKILKYGSVGVFFGGLGISTGKGTGGPTGYIPLGQGPGVRVGATPTVVRPGVIPEIIGPTELIPVDSVTPIDPAAPSIVTLTDSSAGADLLPGEVETIAEVHPVPIDNVELDTPLVSGDRHAILEVTDANPPFRRTVTRTQYHNPAFEIISESTPLIGESTPSDHVFVFEGSGGVQVGDANESIELDTFPSRYSFDIEEPTPPRRVSTPIERISQEFRTLRRALYNRRLTEQVQVRDPLFIRSPSRLVRFQFDNPVFDEEVTQIFERDVAAVEEPPDRDFLDIERLGRPILTETAEGRVRVSRLGQRASLSTRSGARVGARVHFFTDISTINAEEPIELELLGEHSGDSSVVQEPFESTILDVNIDNIPESLDTNIAETSVDYDSADLLLDNGVEDFSRSQLVIGPSDRSLPSITVPQFESPRETIVYIQDIEGNTVVYPKYEERPTIILPTPSGPAIIQSPTHSSFDYYLHPSLRRKKRKRKYL</sequence>
<organism>
    <name type="scientific">Human papillomavirus 22</name>
    <dbReference type="NCBI Taxonomy" id="37954"/>
    <lineage>
        <taxon>Viruses</taxon>
        <taxon>Monodnaviria</taxon>
        <taxon>Shotokuvirae</taxon>
        <taxon>Cossaviricota</taxon>
        <taxon>Papovaviricetes</taxon>
        <taxon>Zurhausenvirales</taxon>
        <taxon>Papillomaviridae</taxon>
        <taxon>Firstpapillomavirinae</taxon>
        <taxon>Betapapillomavirus</taxon>
        <taxon>Betapapillomavirus 2</taxon>
    </lineage>
</organism>
<organismHost>
    <name type="scientific">Homo sapiens</name>
    <name type="common">Human</name>
    <dbReference type="NCBI Taxonomy" id="9606"/>
</organismHost>
<name>VL2_HPV22</name>